<reference key="1">
    <citation type="journal article" date="1987" name="Nature">
        <title>Sequence of simian immunodeficiency virus and its relationship to the human immunodeficiency viruses.</title>
        <authorList>
            <person name="Franchini G."/>
            <person name="Gallo R.C."/>
            <person name="Guo H.-G."/>
            <person name="Gurgo C."/>
            <person name="Callatti E."/>
            <person name="Fargnoli K."/>
            <person name="Hall L."/>
            <person name="Wong-Staal F."/>
            <person name="Reitz M.S. Jr."/>
        </authorList>
    </citation>
    <scope>NUCLEOTIDE SEQUENCE [GENOMIC DNA]</scope>
</reference>
<reference key="2">
    <citation type="journal article" date="2013" name="Gene Ther.">
        <title>Efficient transduction of myeloid cells by an HIV-1-derived lentiviral vector that packages the Vpx accessory protein.</title>
        <authorList>
            <person name="Bobadilla S."/>
            <person name="Sunseri N."/>
            <person name="Landau N.R."/>
        </authorList>
    </citation>
    <scope>FUNCTION</scope>
</reference>
<dbReference type="EMBL" id="Y00295">
    <property type="status" value="NOT_ANNOTATED_CDS"/>
    <property type="molecule type" value="Genomic_DNA"/>
</dbReference>
<dbReference type="SMR" id="P05916"/>
<dbReference type="GO" id="GO:0042025">
    <property type="term" value="C:host cell nucleus"/>
    <property type="evidence" value="ECO:0007669"/>
    <property type="project" value="UniProtKB-SubCell"/>
</dbReference>
<dbReference type="GO" id="GO:0044423">
    <property type="term" value="C:virion component"/>
    <property type="evidence" value="ECO:0007669"/>
    <property type="project" value="UniProtKB-KW"/>
</dbReference>
<dbReference type="GO" id="GO:0052170">
    <property type="term" value="P:symbiont-mediated suppression of host innate immune response"/>
    <property type="evidence" value="ECO:0007669"/>
    <property type="project" value="UniProtKB-KW"/>
</dbReference>
<dbReference type="GO" id="GO:0019058">
    <property type="term" value="P:viral life cycle"/>
    <property type="evidence" value="ECO:0007669"/>
    <property type="project" value="InterPro"/>
</dbReference>
<dbReference type="Gene3D" id="1.20.5.4730">
    <property type="match status" value="1"/>
</dbReference>
<dbReference type="InterPro" id="IPR053711">
    <property type="entry name" value="Lentiviral_Vpx_assoc_factor"/>
</dbReference>
<dbReference type="InterPro" id="IPR000012">
    <property type="entry name" value="RetroV_VpR/X"/>
</dbReference>
<dbReference type="Pfam" id="PF00522">
    <property type="entry name" value="VPR"/>
    <property type="match status" value="1"/>
</dbReference>
<accession>P05916</accession>
<keyword id="KW-1048">Host nucleus</keyword>
<keyword id="KW-0945">Host-virus interaction</keyword>
<keyword id="KW-1090">Inhibition of host innate immune response by virus</keyword>
<keyword id="KW-0899">Viral immunoevasion</keyword>
<keyword id="KW-0946">Virion</keyword>
<name>VPX_SIVMK</name>
<organism>
    <name type="scientific">Simian immunodeficiency virus (isolate K6W)</name>
    <name type="common">SIV-mac</name>
    <name type="synonym">Simian immunodeficiency virus rhesus monkey</name>
    <dbReference type="NCBI Taxonomy" id="11735"/>
    <lineage>
        <taxon>Viruses</taxon>
        <taxon>Riboviria</taxon>
        <taxon>Pararnavirae</taxon>
        <taxon>Artverviricota</taxon>
        <taxon>Revtraviricetes</taxon>
        <taxon>Ortervirales</taxon>
        <taxon>Retroviridae</taxon>
        <taxon>Orthoretrovirinae</taxon>
        <taxon>Lentivirus</taxon>
        <taxon>Simian immunodeficiency virus</taxon>
    </lineage>
</organism>
<organismHost>
    <name type="scientific">Cercopithecidae</name>
    <name type="common">Old World monkeys</name>
    <dbReference type="NCBI Taxonomy" id="9527"/>
</organismHost>
<comment type="function">
    <text evidence="2">Plays a role in nuclear translocation of the viral pre-integration complex (PIC), thus is required for the virus to infect non-dividing cells. Targets specific host proteins for degradation by the 26S proteasome. Acts by associating with the cellular CUL4A-DDB1 E3 ligase complex through direct interaction with host VPRPB/DCAF-1. This change in the E3 ligase substrate specificity results in the degradation of host SAMHD1. In turn, SAMHD1 depletion allows viral replication in host myeloid cells by preventing SAMHD1-mediated hydrolysis of intracellular dNTPs necessary for reverse transcription.</text>
</comment>
<comment type="subunit">
    <text evidence="1">Interacts with the P6 region of unprocessed GAG. Interacts with host VPRBP/DCAF1, leading to change substrate specificity of the CUL4A-DDB1 E3 ligase complex (By similarity).</text>
</comment>
<comment type="subcellular location">
    <subcellularLocation>
        <location>Virion</location>
    </subcellularLocation>
    <subcellularLocation>
        <location>Host nucleus</location>
    </subcellularLocation>
    <text evidence="1">Nuclear just after virion uncoating, or if expressed in the absence of unprocessed GAG.</text>
</comment>
<comment type="similarity">
    <text evidence="3">Belongs to the lentivirus VPX protein family.</text>
</comment>
<proteinExistence type="inferred from homology"/>
<gene>
    <name type="primary">vpx</name>
</gene>
<feature type="chain" id="PRO_0000085404" description="Protein Vpx">
    <location>
        <begin position="1"/>
        <end position="112"/>
    </location>
</feature>
<feature type="short sequence motif" description="Nuclear localization signal" evidence="1">
    <location>
        <begin position="65"/>
        <end position="72"/>
    </location>
</feature>
<protein>
    <recommendedName>
        <fullName>Protein Vpx</fullName>
    </recommendedName>
    <alternativeName>
        <fullName>Viral protein X</fullName>
    </alternativeName>
    <alternativeName>
        <fullName>X ORF protein</fullName>
    </alternativeName>
</protein>
<evidence type="ECO:0000250" key="1"/>
<evidence type="ECO:0000269" key="2">
    <source>
    </source>
</evidence>
<evidence type="ECO:0000305" key="3"/>
<sequence>MSDPRERIPPGNSGEETIGEAFEWLNRTVEEINREAVNHLPRELIFQVWQRSWEYWHDEQGMSQSYVKYRYLCLMQKALFMHCKKGCRCLGEGHRAGGWRPGPPPPPPPGLA</sequence>